<accession>B3PHK5</accession>
<feature type="chain" id="PRO_1000097933" description="ATP-dependent Clp protease ATP-binding subunit ClpX">
    <location>
        <begin position="1"/>
        <end position="433"/>
    </location>
</feature>
<feature type="domain" description="ClpX-type ZB" evidence="2">
    <location>
        <begin position="5"/>
        <end position="59"/>
    </location>
</feature>
<feature type="binding site" evidence="2">
    <location>
        <position position="18"/>
    </location>
    <ligand>
        <name>Zn(2+)</name>
        <dbReference type="ChEBI" id="CHEBI:29105"/>
    </ligand>
</feature>
<feature type="binding site" evidence="2">
    <location>
        <position position="21"/>
    </location>
    <ligand>
        <name>Zn(2+)</name>
        <dbReference type="ChEBI" id="CHEBI:29105"/>
    </ligand>
</feature>
<feature type="binding site" evidence="2">
    <location>
        <position position="40"/>
    </location>
    <ligand>
        <name>Zn(2+)</name>
        <dbReference type="ChEBI" id="CHEBI:29105"/>
    </ligand>
</feature>
<feature type="binding site" evidence="2">
    <location>
        <position position="43"/>
    </location>
    <ligand>
        <name>Zn(2+)</name>
        <dbReference type="ChEBI" id="CHEBI:29105"/>
    </ligand>
</feature>
<feature type="binding site" evidence="1">
    <location>
        <begin position="127"/>
        <end position="134"/>
    </location>
    <ligand>
        <name>ATP</name>
        <dbReference type="ChEBI" id="CHEBI:30616"/>
    </ligand>
</feature>
<comment type="function">
    <text evidence="1">ATP-dependent specificity component of the Clp protease. It directs the protease to specific substrates. Can perform chaperone functions in the absence of ClpP.</text>
</comment>
<comment type="subunit">
    <text evidence="1">Component of the ClpX-ClpP complex. Forms a hexameric ring that, in the presence of ATP, binds to fourteen ClpP subunits assembled into a disk-like structure with a central cavity, resembling the structure of eukaryotic proteasomes.</text>
</comment>
<comment type="similarity">
    <text evidence="1">Belongs to the ClpX chaperone family.</text>
</comment>
<name>CLPX_CELJU</name>
<gene>
    <name evidence="1" type="primary">clpX</name>
    <name type="ordered locus">CJA_2005</name>
</gene>
<evidence type="ECO:0000255" key="1">
    <source>
        <dbReference type="HAMAP-Rule" id="MF_00175"/>
    </source>
</evidence>
<evidence type="ECO:0000255" key="2">
    <source>
        <dbReference type="PROSITE-ProRule" id="PRU01250"/>
    </source>
</evidence>
<dbReference type="EMBL" id="CP000934">
    <property type="protein sequence ID" value="ACE85043.1"/>
    <property type="molecule type" value="Genomic_DNA"/>
</dbReference>
<dbReference type="RefSeq" id="WP_012487614.1">
    <property type="nucleotide sequence ID" value="NC_010995.1"/>
</dbReference>
<dbReference type="SMR" id="B3PHK5"/>
<dbReference type="STRING" id="498211.CJA_2005"/>
<dbReference type="KEGG" id="cja:CJA_2005"/>
<dbReference type="eggNOG" id="COG1219">
    <property type="taxonomic scope" value="Bacteria"/>
</dbReference>
<dbReference type="HOGENOM" id="CLU_014218_8_2_6"/>
<dbReference type="OrthoDB" id="9804062at2"/>
<dbReference type="Proteomes" id="UP000001036">
    <property type="component" value="Chromosome"/>
</dbReference>
<dbReference type="GO" id="GO:0009376">
    <property type="term" value="C:HslUV protease complex"/>
    <property type="evidence" value="ECO:0007669"/>
    <property type="project" value="TreeGrafter"/>
</dbReference>
<dbReference type="GO" id="GO:0005524">
    <property type="term" value="F:ATP binding"/>
    <property type="evidence" value="ECO:0007669"/>
    <property type="project" value="UniProtKB-UniRule"/>
</dbReference>
<dbReference type="GO" id="GO:0016887">
    <property type="term" value="F:ATP hydrolysis activity"/>
    <property type="evidence" value="ECO:0007669"/>
    <property type="project" value="InterPro"/>
</dbReference>
<dbReference type="GO" id="GO:0140662">
    <property type="term" value="F:ATP-dependent protein folding chaperone"/>
    <property type="evidence" value="ECO:0007669"/>
    <property type="project" value="InterPro"/>
</dbReference>
<dbReference type="GO" id="GO:0046983">
    <property type="term" value="F:protein dimerization activity"/>
    <property type="evidence" value="ECO:0007669"/>
    <property type="project" value="InterPro"/>
</dbReference>
<dbReference type="GO" id="GO:0051082">
    <property type="term" value="F:unfolded protein binding"/>
    <property type="evidence" value="ECO:0007669"/>
    <property type="project" value="UniProtKB-UniRule"/>
</dbReference>
<dbReference type="GO" id="GO:0008270">
    <property type="term" value="F:zinc ion binding"/>
    <property type="evidence" value="ECO:0007669"/>
    <property type="project" value="InterPro"/>
</dbReference>
<dbReference type="GO" id="GO:0051301">
    <property type="term" value="P:cell division"/>
    <property type="evidence" value="ECO:0007669"/>
    <property type="project" value="TreeGrafter"/>
</dbReference>
<dbReference type="GO" id="GO:0051603">
    <property type="term" value="P:proteolysis involved in protein catabolic process"/>
    <property type="evidence" value="ECO:0007669"/>
    <property type="project" value="TreeGrafter"/>
</dbReference>
<dbReference type="CDD" id="cd19497">
    <property type="entry name" value="RecA-like_ClpX"/>
    <property type="match status" value="1"/>
</dbReference>
<dbReference type="FunFam" id="1.10.8.60:FF:000002">
    <property type="entry name" value="ATP-dependent Clp protease ATP-binding subunit ClpX"/>
    <property type="match status" value="1"/>
</dbReference>
<dbReference type="FunFam" id="3.40.50.300:FF:000005">
    <property type="entry name" value="ATP-dependent Clp protease ATP-binding subunit ClpX"/>
    <property type="match status" value="1"/>
</dbReference>
<dbReference type="Gene3D" id="1.10.8.60">
    <property type="match status" value="1"/>
</dbReference>
<dbReference type="Gene3D" id="6.20.220.10">
    <property type="entry name" value="ClpX chaperone, C4-type zinc finger domain"/>
    <property type="match status" value="1"/>
</dbReference>
<dbReference type="Gene3D" id="3.40.50.300">
    <property type="entry name" value="P-loop containing nucleotide triphosphate hydrolases"/>
    <property type="match status" value="1"/>
</dbReference>
<dbReference type="HAMAP" id="MF_00175">
    <property type="entry name" value="ClpX"/>
    <property type="match status" value="1"/>
</dbReference>
<dbReference type="InterPro" id="IPR003593">
    <property type="entry name" value="AAA+_ATPase"/>
</dbReference>
<dbReference type="InterPro" id="IPR050052">
    <property type="entry name" value="ATP-dep_Clp_protease_ClpX"/>
</dbReference>
<dbReference type="InterPro" id="IPR003959">
    <property type="entry name" value="ATPase_AAA_core"/>
</dbReference>
<dbReference type="InterPro" id="IPR019489">
    <property type="entry name" value="Clp_ATPase_C"/>
</dbReference>
<dbReference type="InterPro" id="IPR004487">
    <property type="entry name" value="Clp_protease_ATP-bd_su_ClpX"/>
</dbReference>
<dbReference type="InterPro" id="IPR046425">
    <property type="entry name" value="ClpX_bact"/>
</dbReference>
<dbReference type="InterPro" id="IPR027417">
    <property type="entry name" value="P-loop_NTPase"/>
</dbReference>
<dbReference type="InterPro" id="IPR010603">
    <property type="entry name" value="Znf_CppX_C4"/>
</dbReference>
<dbReference type="InterPro" id="IPR038366">
    <property type="entry name" value="Znf_CppX_C4_sf"/>
</dbReference>
<dbReference type="NCBIfam" id="TIGR00382">
    <property type="entry name" value="clpX"/>
    <property type="match status" value="1"/>
</dbReference>
<dbReference type="NCBIfam" id="NF003745">
    <property type="entry name" value="PRK05342.1"/>
    <property type="match status" value="1"/>
</dbReference>
<dbReference type="PANTHER" id="PTHR48102:SF7">
    <property type="entry name" value="ATP-DEPENDENT CLP PROTEASE ATP-BINDING SUBUNIT CLPX-LIKE, MITOCHONDRIAL"/>
    <property type="match status" value="1"/>
</dbReference>
<dbReference type="PANTHER" id="PTHR48102">
    <property type="entry name" value="ATP-DEPENDENT CLP PROTEASE ATP-BINDING SUBUNIT CLPX-LIKE, MITOCHONDRIAL-RELATED"/>
    <property type="match status" value="1"/>
</dbReference>
<dbReference type="Pfam" id="PF07724">
    <property type="entry name" value="AAA_2"/>
    <property type="match status" value="1"/>
</dbReference>
<dbReference type="Pfam" id="PF10431">
    <property type="entry name" value="ClpB_D2-small"/>
    <property type="match status" value="1"/>
</dbReference>
<dbReference type="Pfam" id="PF06689">
    <property type="entry name" value="zf-C4_ClpX"/>
    <property type="match status" value="1"/>
</dbReference>
<dbReference type="SMART" id="SM00382">
    <property type="entry name" value="AAA"/>
    <property type="match status" value="1"/>
</dbReference>
<dbReference type="SMART" id="SM01086">
    <property type="entry name" value="ClpB_D2-small"/>
    <property type="match status" value="1"/>
</dbReference>
<dbReference type="SMART" id="SM00994">
    <property type="entry name" value="zf-C4_ClpX"/>
    <property type="match status" value="1"/>
</dbReference>
<dbReference type="SUPFAM" id="SSF57716">
    <property type="entry name" value="Glucocorticoid receptor-like (DNA-binding domain)"/>
    <property type="match status" value="1"/>
</dbReference>
<dbReference type="SUPFAM" id="SSF52540">
    <property type="entry name" value="P-loop containing nucleoside triphosphate hydrolases"/>
    <property type="match status" value="1"/>
</dbReference>
<dbReference type="PROSITE" id="PS51902">
    <property type="entry name" value="CLPX_ZB"/>
    <property type="match status" value="1"/>
</dbReference>
<proteinExistence type="inferred from homology"/>
<sequence length="433" mass="47749">MTDHTNDSSDKNGKLLYCSFCGKSQHEVRKLIAGPSVFICDECVDLCNDIIREEIQESASEGSSDKLPKPHEISAILDQYVIGQKRAKKVLAVAVYNHYKRLRFGDKTAKDKEPVELGKSNILLVGPTGSGKTLLAETLARLLDVPFTIADATTLTEAGYVGEDVENIIQKLLQKCDYDVEKAQQGIVYIDEIDKISRKSDNPSITRDVSGEGVQQALLKLIEGTIASVPPQGGRKHPQQEFLQVDTSNILFICGGAFAGLDKVIRDRSEKGGIGFAAEVKSKDDKRNFGETLHDLEPEDLVRYGLIPEFVGRLPVIATLDELDKAALIQILTEPKNALTKQYGKLFEMEGVQIDFRPDALDAVAERALERKTGARGLRSIMESVLLDTMYRIPSEEHVVKVVVDELVIKGESEPLLVYEQVEKPPKAASAED</sequence>
<reference key="1">
    <citation type="journal article" date="2008" name="J. Bacteriol.">
        <title>Insights into plant cell wall degradation from the genome sequence of the soil bacterium Cellvibrio japonicus.</title>
        <authorList>
            <person name="DeBoy R.T."/>
            <person name="Mongodin E.F."/>
            <person name="Fouts D.E."/>
            <person name="Tailford L.E."/>
            <person name="Khouri H."/>
            <person name="Emerson J.B."/>
            <person name="Mohamoud Y."/>
            <person name="Watkins K."/>
            <person name="Henrissat B."/>
            <person name="Gilbert H.J."/>
            <person name="Nelson K.E."/>
        </authorList>
    </citation>
    <scope>NUCLEOTIDE SEQUENCE [LARGE SCALE GENOMIC DNA]</scope>
    <source>
        <strain>Ueda107</strain>
    </source>
</reference>
<protein>
    <recommendedName>
        <fullName evidence="1">ATP-dependent Clp protease ATP-binding subunit ClpX</fullName>
    </recommendedName>
</protein>
<keyword id="KW-0067">ATP-binding</keyword>
<keyword id="KW-0143">Chaperone</keyword>
<keyword id="KW-0479">Metal-binding</keyword>
<keyword id="KW-0547">Nucleotide-binding</keyword>
<keyword id="KW-1185">Reference proteome</keyword>
<keyword id="KW-0862">Zinc</keyword>
<organism>
    <name type="scientific">Cellvibrio japonicus (strain Ueda107)</name>
    <name type="common">Pseudomonas fluorescens subsp. cellulosa</name>
    <dbReference type="NCBI Taxonomy" id="498211"/>
    <lineage>
        <taxon>Bacteria</taxon>
        <taxon>Pseudomonadati</taxon>
        <taxon>Pseudomonadota</taxon>
        <taxon>Gammaproteobacteria</taxon>
        <taxon>Cellvibrionales</taxon>
        <taxon>Cellvibrionaceae</taxon>
        <taxon>Cellvibrio</taxon>
    </lineage>
</organism>